<organism>
    <name type="scientific">Homo sapiens</name>
    <name type="common">Human</name>
    <dbReference type="NCBI Taxonomy" id="9606"/>
    <lineage>
        <taxon>Eukaryota</taxon>
        <taxon>Metazoa</taxon>
        <taxon>Chordata</taxon>
        <taxon>Craniata</taxon>
        <taxon>Vertebrata</taxon>
        <taxon>Euteleostomi</taxon>
        <taxon>Mammalia</taxon>
        <taxon>Eutheria</taxon>
        <taxon>Euarchontoglires</taxon>
        <taxon>Primates</taxon>
        <taxon>Haplorrhini</taxon>
        <taxon>Catarrhini</taxon>
        <taxon>Hominidae</taxon>
        <taxon>Homo</taxon>
    </lineage>
</organism>
<name>YBOX1_HUMAN</name>
<dbReference type="EMBL" id="M24070">
    <property type="protein sequence ID" value="AAA35750.1"/>
    <property type="status" value="ALT_INIT"/>
    <property type="molecule type" value="mRNA"/>
</dbReference>
<dbReference type="EMBL" id="J03827">
    <property type="protein sequence ID" value="AAA61308.1"/>
    <property type="status" value="ALT_FRAME"/>
    <property type="molecule type" value="mRNA"/>
</dbReference>
<dbReference type="EMBL" id="M83234">
    <property type="protein sequence ID" value="AAA59949.1"/>
    <property type="status" value="ALT_FRAME"/>
    <property type="molecule type" value="mRNA"/>
</dbReference>
<dbReference type="EMBL" id="L28809">
    <property type="protein sequence ID" value="AAA20871.1"/>
    <property type="molecule type" value="mRNA"/>
</dbReference>
<dbReference type="EMBL" id="BC002411">
    <property type="protein sequence ID" value="AAH02411.1"/>
    <property type="molecule type" value="mRNA"/>
</dbReference>
<dbReference type="EMBL" id="BC010430">
    <property type="protein sequence ID" value="AAH10430.1"/>
    <property type="molecule type" value="mRNA"/>
</dbReference>
<dbReference type="EMBL" id="BC015208">
    <property type="protein sequence ID" value="AAH15208.1"/>
    <property type="molecule type" value="mRNA"/>
</dbReference>
<dbReference type="EMBL" id="BC038384">
    <property type="protein sequence ID" value="AAH38384.1"/>
    <property type="molecule type" value="mRNA"/>
</dbReference>
<dbReference type="EMBL" id="BC065571">
    <property type="protein sequence ID" value="AAH65571.1"/>
    <property type="molecule type" value="mRNA"/>
</dbReference>
<dbReference type="EMBL" id="BC070084">
    <property type="protein sequence ID" value="AAH70084.1"/>
    <property type="molecule type" value="mRNA"/>
</dbReference>
<dbReference type="EMBL" id="BC071708">
    <property type="protein sequence ID" value="AAH71708.1"/>
    <property type="molecule type" value="mRNA"/>
</dbReference>
<dbReference type="EMBL" id="BC090038">
    <property type="protein sequence ID" value="AAH90038.1"/>
    <property type="molecule type" value="mRNA"/>
</dbReference>
<dbReference type="EMBL" id="BC098435">
    <property type="protein sequence ID" value="AAH98435.1"/>
    <property type="molecule type" value="mRNA"/>
</dbReference>
<dbReference type="EMBL" id="BC106045">
    <property type="protein sequence ID" value="AAI06046.1"/>
    <property type="molecule type" value="mRNA"/>
</dbReference>
<dbReference type="CCDS" id="CCDS470.1"/>
<dbReference type="PIR" id="I39382">
    <property type="entry name" value="I39382"/>
</dbReference>
<dbReference type="PIR" id="S34426">
    <property type="entry name" value="S34426"/>
</dbReference>
<dbReference type="RefSeq" id="NP_004550.2">
    <property type="nucleotide sequence ID" value="NM_004559.4"/>
</dbReference>
<dbReference type="PDB" id="1H95">
    <property type="method" value="NMR"/>
    <property type="chains" value="A=52-129"/>
</dbReference>
<dbReference type="PDB" id="5YTS">
    <property type="method" value="X-ray"/>
    <property type="resolution" value="1.77 A"/>
    <property type="chains" value="A=50-130"/>
</dbReference>
<dbReference type="PDB" id="5YTT">
    <property type="method" value="X-ray"/>
    <property type="resolution" value="1.60 A"/>
    <property type="chains" value="A=50-130"/>
</dbReference>
<dbReference type="PDB" id="5YTV">
    <property type="method" value="X-ray"/>
    <property type="resolution" value="1.70 A"/>
    <property type="chains" value="A=50-130"/>
</dbReference>
<dbReference type="PDB" id="5YTX">
    <property type="method" value="X-ray"/>
    <property type="resolution" value="1.55 A"/>
    <property type="chains" value="A=50-130"/>
</dbReference>
<dbReference type="PDB" id="6A6L">
    <property type="method" value="X-ray"/>
    <property type="resolution" value="1.78 A"/>
    <property type="chains" value="A=50-130"/>
</dbReference>
<dbReference type="PDB" id="6KTC">
    <property type="method" value="X-ray"/>
    <property type="resolution" value="2.01 A"/>
    <property type="chains" value="A=52-129"/>
</dbReference>
<dbReference type="PDB" id="6KUG">
    <property type="method" value="X-ray"/>
    <property type="resolution" value="1.40 A"/>
    <property type="chains" value="A=52-129"/>
</dbReference>
<dbReference type="PDB" id="6LMR">
    <property type="method" value="NMR"/>
    <property type="chains" value="A=44-140"/>
</dbReference>
<dbReference type="PDB" id="6LMS">
    <property type="method" value="NMR"/>
    <property type="chains" value="A=51-140"/>
</dbReference>
<dbReference type="PDBsum" id="1H95"/>
<dbReference type="PDBsum" id="5YTS"/>
<dbReference type="PDBsum" id="5YTT"/>
<dbReference type="PDBsum" id="5YTV"/>
<dbReference type="PDBsum" id="5YTX"/>
<dbReference type="PDBsum" id="6A6L"/>
<dbReference type="PDBsum" id="6KTC"/>
<dbReference type="PDBsum" id="6KUG"/>
<dbReference type="PDBsum" id="6LMR"/>
<dbReference type="PDBsum" id="6LMS"/>
<dbReference type="SMR" id="P67809"/>
<dbReference type="BioGRID" id="110959">
    <property type="interactions" value="773"/>
</dbReference>
<dbReference type="ComplexPortal" id="CPX-1080">
    <property type="entry name" value="CRD-mediated mRNA stability complex"/>
</dbReference>
<dbReference type="CORUM" id="P67809"/>
<dbReference type="DIP" id="DIP-29405N"/>
<dbReference type="FunCoup" id="P67809">
    <property type="interactions" value="1907"/>
</dbReference>
<dbReference type="IntAct" id="P67809">
    <property type="interactions" value="539"/>
</dbReference>
<dbReference type="MINT" id="P67809"/>
<dbReference type="STRING" id="9606.ENSP00000361626"/>
<dbReference type="ChEMBL" id="CHEMBL4296006"/>
<dbReference type="MoonProt" id="P67809"/>
<dbReference type="GlyCosmos" id="P67809">
    <property type="glycosylation" value="4 sites, 1 glycan"/>
</dbReference>
<dbReference type="GlyGen" id="P67809">
    <property type="glycosylation" value="9 sites, 1 N-linked glycan (1 site), 1 O-linked glycan (7 sites)"/>
</dbReference>
<dbReference type="iPTMnet" id="P67809"/>
<dbReference type="MetOSite" id="P67809"/>
<dbReference type="PhosphoSitePlus" id="P67809"/>
<dbReference type="SwissPalm" id="P67809"/>
<dbReference type="BioMuta" id="YBX1"/>
<dbReference type="DMDM" id="54040031"/>
<dbReference type="jPOST" id="P67809"/>
<dbReference type="MassIVE" id="P67809"/>
<dbReference type="PaxDb" id="9606-ENSP00000361626"/>
<dbReference type="PeptideAtlas" id="P67809"/>
<dbReference type="ProteomicsDB" id="57522"/>
<dbReference type="Pumba" id="P67809"/>
<dbReference type="TopDownProteomics" id="P67809"/>
<dbReference type="Antibodypedia" id="32231">
    <property type="antibodies" value="602 antibodies from 36 providers"/>
</dbReference>
<dbReference type="DNASU" id="4904"/>
<dbReference type="Ensembl" id="ENST00000321358.12">
    <property type="protein sequence ID" value="ENSP00000361626.3"/>
    <property type="gene ID" value="ENSG00000065978.19"/>
</dbReference>
<dbReference type="GeneID" id="4904"/>
<dbReference type="KEGG" id="hsa:4904"/>
<dbReference type="MANE-Select" id="ENST00000321358.12">
    <property type="protein sequence ID" value="ENSP00000361626.3"/>
    <property type="RefSeq nucleotide sequence ID" value="NM_004559.5"/>
    <property type="RefSeq protein sequence ID" value="NP_004550.2"/>
</dbReference>
<dbReference type="UCSC" id="uc001chs.4">
    <property type="organism name" value="human"/>
</dbReference>
<dbReference type="AGR" id="HGNC:8014"/>
<dbReference type="CTD" id="4904"/>
<dbReference type="DisGeNET" id="4904"/>
<dbReference type="GeneCards" id="YBX1"/>
<dbReference type="HGNC" id="HGNC:8014">
    <property type="gene designation" value="YBX1"/>
</dbReference>
<dbReference type="HPA" id="ENSG00000065978">
    <property type="expression patterns" value="Tissue enhanced (skeletal)"/>
</dbReference>
<dbReference type="MIM" id="154030">
    <property type="type" value="gene"/>
</dbReference>
<dbReference type="neXtProt" id="NX_P67809"/>
<dbReference type="OpenTargets" id="ENSG00000065978"/>
<dbReference type="PharmGKB" id="PA31791"/>
<dbReference type="VEuPathDB" id="HostDB:ENSG00000065978"/>
<dbReference type="eggNOG" id="KOG3070">
    <property type="taxonomic scope" value="Eukaryota"/>
</dbReference>
<dbReference type="GeneTree" id="ENSGT00940000153341"/>
<dbReference type="HOGENOM" id="CLU_063071_1_0_1"/>
<dbReference type="InParanoid" id="P67809"/>
<dbReference type="OMA" id="RYYRRPF"/>
<dbReference type="OrthoDB" id="9538680at2759"/>
<dbReference type="PAN-GO" id="P67809">
    <property type="GO annotations" value="4 GO annotations based on evolutionary models"/>
</dbReference>
<dbReference type="PhylomeDB" id="P67809"/>
<dbReference type="TreeFam" id="TF317306"/>
<dbReference type="PathwayCommons" id="P67809"/>
<dbReference type="Reactome" id="R-HSA-2173796">
    <property type="pathway name" value="SMAD2/SMAD3:SMAD4 heterotrimer regulates transcription"/>
</dbReference>
<dbReference type="Reactome" id="R-HSA-72163">
    <property type="pathway name" value="mRNA Splicing - Major Pathway"/>
</dbReference>
<dbReference type="Reactome" id="R-HSA-72165">
    <property type="pathway name" value="mRNA Splicing - Minor Pathway"/>
</dbReference>
<dbReference type="Reactome" id="R-HSA-72203">
    <property type="pathway name" value="Processing of Capped Intron-Containing Pre-mRNA"/>
</dbReference>
<dbReference type="Reactome" id="R-HSA-877300">
    <property type="pathway name" value="Interferon gamma signaling"/>
</dbReference>
<dbReference type="Reactome" id="R-HSA-9017802">
    <property type="pathway name" value="Noncanonical activation of NOTCH3"/>
</dbReference>
<dbReference type="SignaLink" id="P67809"/>
<dbReference type="SIGNOR" id="P67809"/>
<dbReference type="BioGRID-ORCS" id="4904">
    <property type="hits" value="727 hits in 1144 CRISPR screens"/>
</dbReference>
<dbReference type="CD-CODE" id="232F8A39">
    <property type="entry name" value="P-body"/>
</dbReference>
<dbReference type="CD-CODE" id="5253F164">
    <property type="entry name" value="YBX1 condensate"/>
</dbReference>
<dbReference type="CD-CODE" id="DEE660B4">
    <property type="entry name" value="Stress granule"/>
</dbReference>
<dbReference type="CD-CODE" id="F85A2E29">
    <property type="entry name" value="IMP1 RNP granule"/>
</dbReference>
<dbReference type="ChiTaRS" id="YBX1">
    <property type="organism name" value="human"/>
</dbReference>
<dbReference type="EvolutionaryTrace" id="P67809"/>
<dbReference type="GeneWiki" id="Y_box_binding_protein_1"/>
<dbReference type="GenomeRNAi" id="4904"/>
<dbReference type="Pharos" id="P67809">
    <property type="development level" value="Tbio"/>
</dbReference>
<dbReference type="PRO" id="PR:P67809"/>
<dbReference type="Proteomes" id="UP000005640">
    <property type="component" value="Chromosome 1"/>
</dbReference>
<dbReference type="RNAct" id="P67809">
    <property type="molecule type" value="protein"/>
</dbReference>
<dbReference type="Bgee" id="ENSG00000065978">
    <property type="expression patterns" value="Expressed in left testis and 105 other cell types or tissues"/>
</dbReference>
<dbReference type="ExpressionAtlas" id="P67809">
    <property type="expression patterns" value="baseline and differential"/>
</dbReference>
<dbReference type="GO" id="GO:0070937">
    <property type="term" value="C:CRD-mediated mRNA stability complex"/>
    <property type="evidence" value="ECO:0000314"/>
    <property type="project" value="UniProtKB"/>
</dbReference>
<dbReference type="GO" id="GO:0005737">
    <property type="term" value="C:cytoplasm"/>
    <property type="evidence" value="ECO:0000314"/>
    <property type="project" value="AgBase"/>
</dbReference>
<dbReference type="GO" id="GO:0010494">
    <property type="term" value="C:cytoplasmic stress granule"/>
    <property type="evidence" value="ECO:0000314"/>
    <property type="project" value="UniProtKB"/>
</dbReference>
<dbReference type="GO" id="GO:0005829">
    <property type="term" value="C:cytosol"/>
    <property type="evidence" value="ECO:0000314"/>
    <property type="project" value="HPA"/>
</dbReference>
<dbReference type="GO" id="GO:0005783">
    <property type="term" value="C:endoplasmic reticulum"/>
    <property type="evidence" value="ECO:0000314"/>
    <property type="project" value="HPA"/>
</dbReference>
<dbReference type="GO" id="GO:0070062">
    <property type="term" value="C:extracellular exosome"/>
    <property type="evidence" value="ECO:0000314"/>
    <property type="project" value="UniProtKB"/>
</dbReference>
<dbReference type="GO" id="GO:0005576">
    <property type="term" value="C:extracellular region"/>
    <property type="evidence" value="ECO:0000304"/>
    <property type="project" value="Reactome"/>
</dbReference>
<dbReference type="GO" id="GO:0071204">
    <property type="term" value="C:histone pre-mRNA 3'end processing complex"/>
    <property type="evidence" value="ECO:0000250"/>
    <property type="project" value="UniProtKB"/>
</dbReference>
<dbReference type="GO" id="GO:0043231">
    <property type="term" value="C:intracellular membrane-bounded organelle"/>
    <property type="evidence" value="ECO:0000314"/>
    <property type="project" value="HPA"/>
</dbReference>
<dbReference type="GO" id="GO:0005654">
    <property type="term" value="C:nucleoplasm"/>
    <property type="evidence" value="ECO:0000304"/>
    <property type="project" value="Reactome"/>
</dbReference>
<dbReference type="GO" id="GO:0005634">
    <property type="term" value="C:nucleus"/>
    <property type="evidence" value="ECO:0000318"/>
    <property type="project" value="GO_Central"/>
</dbReference>
<dbReference type="GO" id="GO:0000932">
    <property type="term" value="C:P-body"/>
    <property type="evidence" value="ECO:0007669"/>
    <property type="project" value="UniProtKB-SubCell"/>
</dbReference>
<dbReference type="GO" id="GO:0005886">
    <property type="term" value="C:plasma membrane"/>
    <property type="evidence" value="ECO:0000314"/>
    <property type="project" value="HPA"/>
</dbReference>
<dbReference type="GO" id="GO:1990904">
    <property type="term" value="C:ribonucleoprotein complex"/>
    <property type="evidence" value="ECO:0000314"/>
    <property type="project" value="UniProtKB"/>
</dbReference>
<dbReference type="GO" id="GO:0045202">
    <property type="term" value="C:synapse"/>
    <property type="evidence" value="ECO:0007669"/>
    <property type="project" value="Ensembl"/>
</dbReference>
<dbReference type="GO" id="GO:0005689">
    <property type="term" value="C:U12-type spliceosomal complex"/>
    <property type="evidence" value="ECO:0000314"/>
    <property type="project" value="UniProtKB"/>
</dbReference>
<dbReference type="GO" id="GO:0062153">
    <property type="term" value="F:C5-methylcytidine-containing RNA reader activity"/>
    <property type="evidence" value="ECO:0000314"/>
    <property type="project" value="UniProtKB"/>
</dbReference>
<dbReference type="GO" id="GO:0003682">
    <property type="term" value="F:chromatin binding"/>
    <property type="evidence" value="ECO:0007669"/>
    <property type="project" value="Ensembl"/>
</dbReference>
<dbReference type="GO" id="GO:0003677">
    <property type="term" value="F:DNA binding"/>
    <property type="evidence" value="ECO:0000304"/>
    <property type="project" value="UniProtKB"/>
</dbReference>
<dbReference type="GO" id="GO:0003690">
    <property type="term" value="F:double-stranded DNA binding"/>
    <property type="evidence" value="ECO:0000304"/>
    <property type="project" value="ProtInc"/>
</dbReference>
<dbReference type="GO" id="GO:0051020">
    <property type="term" value="F:GTPase binding"/>
    <property type="evidence" value="ECO:0000353"/>
    <property type="project" value="UniProtKB"/>
</dbReference>
<dbReference type="GO" id="GO:0035198">
    <property type="term" value="F:miRNA binding"/>
    <property type="evidence" value="ECO:0000314"/>
    <property type="project" value="UniProtKB"/>
</dbReference>
<dbReference type="GO" id="GO:0003729">
    <property type="term" value="F:mRNA binding"/>
    <property type="evidence" value="ECO:0007669"/>
    <property type="project" value="Ensembl"/>
</dbReference>
<dbReference type="GO" id="GO:0003676">
    <property type="term" value="F:nucleic acid binding"/>
    <property type="evidence" value="ECO:0000318"/>
    <property type="project" value="GO_Central"/>
</dbReference>
<dbReference type="GO" id="GO:0003723">
    <property type="term" value="F:RNA binding"/>
    <property type="evidence" value="ECO:0000314"/>
    <property type="project" value="UniProtKB"/>
</dbReference>
<dbReference type="GO" id="GO:1990837">
    <property type="term" value="F:sequence-specific double-stranded DNA binding"/>
    <property type="evidence" value="ECO:0000314"/>
    <property type="project" value="ARUK-UCL"/>
</dbReference>
<dbReference type="GO" id="GO:0003697">
    <property type="term" value="F:single-stranded DNA binding"/>
    <property type="evidence" value="ECO:0007669"/>
    <property type="project" value="Ensembl"/>
</dbReference>
<dbReference type="GO" id="GO:0098761">
    <property type="term" value="P:cellular response to interleukin-7"/>
    <property type="evidence" value="ECO:0007669"/>
    <property type="project" value="Ensembl"/>
</dbReference>
<dbReference type="GO" id="GO:0070934">
    <property type="term" value="P:CRD-mediated mRNA stabilization"/>
    <property type="evidence" value="ECO:0000314"/>
    <property type="project" value="ComplexPortal"/>
</dbReference>
<dbReference type="GO" id="GO:0048598">
    <property type="term" value="P:embryonic morphogenesis"/>
    <property type="evidence" value="ECO:0000250"/>
    <property type="project" value="UniProtKB"/>
</dbReference>
<dbReference type="GO" id="GO:0008544">
    <property type="term" value="P:epidermis development"/>
    <property type="evidence" value="ECO:0000250"/>
    <property type="project" value="UniProtKB"/>
</dbReference>
<dbReference type="GO" id="GO:0001701">
    <property type="term" value="P:in utero embryonic development"/>
    <property type="evidence" value="ECO:0007669"/>
    <property type="project" value="Ensembl"/>
</dbReference>
<dbReference type="GO" id="GO:1990428">
    <property type="term" value="P:miRNA transport"/>
    <property type="evidence" value="ECO:0000314"/>
    <property type="project" value="UniProtKB"/>
</dbReference>
<dbReference type="GO" id="GO:0006397">
    <property type="term" value="P:mRNA processing"/>
    <property type="evidence" value="ECO:0007669"/>
    <property type="project" value="UniProtKB-KW"/>
</dbReference>
<dbReference type="GO" id="GO:0048255">
    <property type="term" value="P:mRNA stabilization"/>
    <property type="evidence" value="ECO:0000314"/>
    <property type="project" value="UniProtKB"/>
</dbReference>
<dbReference type="GO" id="GO:2000773">
    <property type="term" value="P:negative regulation of cellular senescence"/>
    <property type="evidence" value="ECO:0000250"/>
    <property type="project" value="UniProtKB"/>
</dbReference>
<dbReference type="GO" id="GO:1900152">
    <property type="term" value="P:negative regulation of nuclear-transcribed mRNA catabolic process, deadenylation-dependent decay"/>
    <property type="evidence" value="ECO:0000314"/>
    <property type="project" value="ComplexPortal"/>
</dbReference>
<dbReference type="GO" id="GO:0051154">
    <property type="term" value="P:negative regulation of striated muscle cell differentiation"/>
    <property type="evidence" value="ECO:0007669"/>
    <property type="project" value="Ensembl"/>
</dbReference>
<dbReference type="GO" id="GO:0000122">
    <property type="term" value="P:negative regulation of transcription by RNA polymerase II"/>
    <property type="evidence" value="ECO:0007669"/>
    <property type="project" value="Ensembl"/>
</dbReference>
<dbReference type="GO" id="GO:0017148">
    <property type="term" value="P:negative regulation of translation"/>
    <property type="evidence" value="ECO:0000250"/>
    <property type="project" value="UniProtKB"/>
</dbReference>
<dbReference type="GO" id="GO:0051781">
    <property type="term" value="P:positive regulation of cell division"/>
    <property type="evidence" value="ECO:0007669"/>
    <property type="project" value="UniProtKB-KW"/>
</dbReference>
<dbReference type="GO" id="GO:2000767">
    <property type="term" value="P:positive regulation of cytoplasmic translation"/>
    <property type="evidence" value="ECO:0000314"/>
    <property type="project" value="ComplexPortal"/>
</dbReference>
<dbReference type="GO" id="GO:0045944">
    <property type="term" value="P:positive regulation of transcription by RNA polymerase II"/>
    <property type="evidence" value="ECO:0000314"/>
    <property type="project" value="NTNU_SB"/>
</dbReference>
<dbReference type="GO" id="GO:1903608">
    <property type="term" value="P:protein localization to cytoplasmic stress granule"/>
    <property type="evidence" value="ECO:0000315"/>
    <property type="project" value="AgBase"/>
</dbReference>
<dbReference type="GO" id="GO:0006355">
    <property type="term" value="P:regulation of DNA-templated transcription"/>
    <property type="evidence" value="ECO:0000314"/>
    <property type="project" value="UniProtKB"/>
</dbReference>
<dbReference type="GO" id="GO:0010468">
    <property type="term" value="P:regulation of gene expression"/>
    <property type="evidence" value="ECO:0000318"/>
    <property type="project" value="GO_Central"/>
</dbReference>
<dbReference type="GO" id="GO:0008380">
    <property type="term" value="P:RNA splicing"/>
    <property type="evidence" value="ECO:0007669"/>
    <property type="project" value="UniProtKB-KW"/>
</dbReference>
<dbReference type="GO" id="GO:0050658">
    <property type="term" value="P:RNA transport"/>
    <property type="evidence" value="ECO:0000315"/>
    <property type="project" value="UniProtKB"/>
</dbReference>
<dbReference type="GO" id="GO:0051031">
    <property type="term" value="P:tRNA transport"/>
    <property type="evidence" value="ECO:0000315"/>
    <property type="project" value="UniProtKB"/>
</dbReference>
<dbReference type="CDD" id="cd04458">
    <property type="entry name" value="CSP_CDS"/>
    <property type="match status" value="1"/>
</dbReference>
<dbReference type="FunFam" id="2.40.50.140:FF:000054">
    <property type="entry name" value="Nuclease-sensitive element-binding protein 1"/>
    <property type="match status" value="1"/>
</dbReference>
<dbReference type="Gene3D" id="2.40.50.140">
    <property type="entry name" value="Nucleic acid-binding proteins"/>
    <property type="match status" value="1"/>
</dbReference>
<dbReference type="InterPro" id="IPR050181">
    <property type="entry name" value="Cold_shock_domain"/>
</dbReference>
<dbReference type="InterPro" id="IPR011129">
    <property type="entry name" value="CSD"/>
</dbReference>
<dbReference type="InterPro" id="IPR019844">
    <property type="entry name" value="CSD_CS"/>
</dbReference>
<dbReference type="InterPro" id="IPR002059">
    <property type="entry name" value="CSP_DNA-bd"/>
</dbReference>
<dbReference type="InterPro" id="IPR012340">
    <property type="entry name" value="NA-bd_OB-fold"/>
</dbReference>
<dbReference type="PANTHER" id="PTHR11544">
    <property type="entry name" value="COLD SHOCK DOMAIN CONTAINING PROTEINS"/>
    <property type="match status" value="1"/>
</dbReference>
<dbReference type="Pfam" id="PF00313">
    <property type="entry name" value="CSD"/>
    <property type="match status" value="1"/>
</dbReference>
<dbReference type="PRINTS" id="PR00050">
    <property type="entry name" value="COLDSHOCK"/>
</dbReference>
<dbReference type="SMART" id="SM00357">
    <property type="entry name" value="CSP"/>
    <property type="match status" value="1"/>
</dbReference>
<dbReference type="SUPFAM" id="SSF50249">
    <property type="entry name" value="Nucleic acid-binding proteins"/>
    <property type="match status" value="1"/>
</dbReference>
<dbReference type="PROSITE" id="PS00352">
    <property type="entry name" value="CSD_1"/>
    <property type="match status" value="1"/>
</dbReference>
<dbReference type="PROSITE" id="PS51857">
    <property type="entry name" value="CSD_2"/>
    <property type="match status" value="1"/>
</dbReference>
<proteinExistence type="evidence at protein level"/>
<reference key="1">
    <citation type="journal article" date="1988" name="Gene">
        <title>Two human genes isolated by a novel method encode DNA-binding proteins containing a common region of homology.</title>
        <authorList>
            <person name="Sakura H."/>
            <person name="Maekawa T."/>
            <person name="Imamoto F."/>
            <person name="Yasuda K."/>
            <person name="Ishii S."/>
        </authorList>
    </citation>
    <scope>NUCLEOTIDE SEQUENCE [MRNA]</scope>
</reference>
<reference key="2">
    <citation type="journal article" date="1988" name="Proc. Natl. Acad. Sci. U.S.A.">
        <title>Characterization of the cDNA encoding a protein binding to the major histocompatibility complex class II Y box.</title>
        <authorList>
            <person name="Didier D.K."/>
            <person name="Schiffenbauer J."/>
            <person name="Woulfe S.L."/>
            <person name="Zacheis M."/>
            <person name="Schwartz B.D."/>
        </authorList>
    </citation>
    <scope>NUCLEOTIDE SEQUENCE [MRNA]</scope>
</reference>
<reference key="3">
    <citation type="journal article" date="1991" name="Nucleic Acids Res.">
        <title>Full length cDNA sequence encoding a nuclease-sensitive element DNA binding protein.</title>
        <authorList>
            <person name="Kolluri R."/>
            <person name="Kinniburgh A.J."/>
        </authorList>
    </citation>
    <scope>NUCLEOTIDE SEQUENCE [MRNA]</scope>
</reference>
<reference key="4">
    <citation type="journal article" date="1994" name="J. Biol. Chem.">
        <title>A human protein containing a 'cold shock' domain binds specifically to H-DNA upstream from the human gamma-globin genes.</title>
        <authorList>
            <person name="Horwitz E.M."/>
            <person name="Maloney K.A."/>
            <person name="Ley T.J."/>
        </authorList>
    </citation>
    <scope>NUCLEOTIDE SEQUENCE [MRNA]</scope>
    <scope>FUNCTION</scope>
    <source>
        <tissue>Bone marrow</tissue>
    </source>
</reference>
<reference key="5">
    <citation type="journal article" date="2004" name="Genome Res.">
        <title>The status, quality, and expansion of the NIH full-length cDNA project: the Mammalian Gene Collection (MGC).</title>
        <authorList>
            <consortium name="The MGC Project Team"/>
        </authorList>
    </citation>
    <scope>NUCLEOTIDE SEQUENCE [LARGE SCALE MRNA]</scope>
    <source>
        <tissue>Adrenal cortex</tissue>
        <tissue>Eye</tissue>
        <tissue>Kidney</tissue>
        <tissue>Muscle</tissue>
        <tissue>Placenta</tissue>
        <tissue>Skin</tissue>
        <tissue>Testis</tissue>
        <tissue>Uterus</tissue>
    </source>
</reference>
<reference key="6">
    <citation type="submission" date="2010-01" db="UniProtKB">
        <authorList>
            <person name="Bienvenut W.V."/>
        </authorList>
    </citation>
    <scope>PROTEIN SEQUENCE OF 2-53; 70-93; 102-137; 157-185; 205-231; 257-279 AND 305-324</scope>
    <scope>CLEAVAGE OF INITIATOR METHIONINE</scope>
    <scope>ACETYLATION AT SER-2</scope>
    <scope>PHOSPHORYLATION AT SER-165</scope>
    <scope>IDENTIFICATION BY MASS SPECTROMETRY</scope>
    <source>
        <tissue>Ovarian carcinoma</tissue>
    </source>
</reference>
<reference key="7">
    <citation type="journal article" date="2000" name="Genes Dev.">
        <title>Nucleolin and YB-1 are required for JNK-mediated interleukin-2 mRNA stabilization during T-cell activation.</title>
        <authorList>
            <person name="Chen C.-Y."/>
            <person name="Gherzi R."/>
            <person name="Andersen J.S."/>
            <person name="Gaietta G."/>
            <person name="Juerchott K."/>
            <person name="Royer H.-D."/>
            <person name="Mann M."/>
            <person name="Karin M."/>
        </authorList>
    </citation>
    <scope>FUNCTION</scope>
    <scope>IDENTIFICATION BY MASS SPECTROMETRY</scope>
    <scope>SUBUNIT</scope>
</reference>
<reference key="8">
    <citation type="journal article" date="2001" name="J. Immunol.">
        <title>Y box-binding factor promotes eosinophil survival by stabilizing granulocyte-macrophage colony-stimulating factor mRNA.</title>
        <authorList>
            <person name="Capowski E.E."/>
            <person name="Esnault S."/>
            <person name="Bhattacharya S."/>
            <person name="Malter J.S."/>
        </authorList>
    </citation>
    <scope>FUNCTION</scope>
</reference>
<reference key="9">
    <citation type="journal article" date="2003" name="J. Biol. Chem.">
        <title>Splicing factor SRp30c interaction with Y-box protein-1 confers nuclear YB-1 shuttling and alternative splice site selection.</title>
        <authorList>
            <person name="Raffetseder U."/>
            <person name="Frye B."/>
            <person name="Rauen T."/>
            <person name="Juerchott K."/>
            <person name="Royer H.-D."/>
            <person name="Jansen P.L."/>
            <person name="Mertens P.R."/>
        </authorList>
    </citation>
    <scope>FUNCTION</scope>
    <scope>INTERACTION WITH SFRS9</scope>
    <scope>SUBCELLULAR LOCATION</scope>
</reference>
<reference key="10">
    <citation type="journal article" date="2003" name="Mol. Cell. Biol.">
        <title>Regulation of alternative splicing by SRrp86 and its interacting proteins.</title>
        <authorList>
            <person name="Li J."/>
            <person name="Hawkins I.C."/>
            <person name="Harvey C.D."/>
            <person name="Jennings J.L."/>
            <person name="Link A.J."/>
            <person name="Patton J.G."/>
        </authorList>
    </citation>
    <scope>INTERACTION WITH SFRS12</scope>
</reference>
<reference key="11">
    <citation type="journal article" date="2004" name="J. Mol. Biol.">
        <title>The Ankrd2 protein, a link between the sarcomere and the nucleus in skeletal muscle.</title>
        <authorList>
            <person name="Kojic S."/>
            <person name="Medeot E."/>
            <person name="Guccione E."/>
            <person name="Krmac H."/>
            <person name="Zara I."/>
            <person name="Martinelli V."/>
            <person name="Valle G."/>
            <person name="Faulkner G."/>
        </authorList>
    </citation>
    <scope>INTERACTION WITH ANKRD2</scope>
</reference>
<reference key="12">
    <citation type="journal article" date="2004" name="Nucleic Acids Res.">
        <title>YB-1 promotes strand separation in vitro of duplex DNA containing either mispaired bases or cisplatin modifications, exhibits endonucleolytic activities and binds several DNA repair proteins.</title>
        <authorList>
            <person name="Gaudreault I."/>
            <person name="Guay D."/>
            <person name="Lebel M."/>
        </authorList>
    </citation>
    <scope>FUNCTION</scope>
    <scope>SUBUNIT</scope>
    <scope>SUBCELLULAR LOCATION</scope>
    <scope>INTERACTION WITH ALYREF/THOC4; NCL; XRCC5; WRN AND MSH2</scope>
</reference>
<reference key="13">
    <citation type="journal article" date="2004" name="RNA">
        <title>The human 18S U11/U12 snRNP contains a set of novel proteins not found in the U2-dependent spliceosome.</title>
        <authorList>
            <person name="Will C.L."/>
            <person name="Schneider C."/>
            <person name="Hossbach M."/>
            <person name="Urlaub H."/>
            <person name="Rauhut R."/>
            <person name="Elbashir S."/>
            <person name="Tuschl T."/>
            <person name="Luehrmann R."/>
        </authorList>
    </citation>
    <scope>IDENTIFICATION IN A COMPLEX WITH THE U11/U12 SPLICEOSOME</scope>
    <scope>IDENTIFICATION BY MASS SPECTROMETRY</scope>
</reference>
<reference key="14">
    <citation type="journal article" date="2005" name="Nat. Biotechnol.">
        <title>Immunoaffinity profiling of tyrosine phosphorylation in cancer cells.</title>
        <authorList>
            <person name="Rush J."/>
            <person name="Moritz A."/>
            <person name="Lee K.A."/>
            <person name="Guo A."/>
            <person name="Goss V.L."/>
            <person name="Spek E.J."/>
            <person name="Zhang H."/>
            <person name="Zha X.-M."/>
            <person name="Polakiewicz R.D."/>
            <person name="Comb M.J."/>
        </authorList>
    </citation>
    <scope>PHOSPHORYLATION [LARGE SCALE ANALYSIS] AT TYR-162</scope>
    <scope>IDENTIFICATION BY MASS SPECTROMETRY [LARGE SCALE ANALYSIS]</scope>
</reference>
<reference key="15">
    <citation type="journal article" date="2005" name="Oncogene">
        <title>Akt phosphorylates the Y-box binding protein 1 at Ser102 located in the cold shock domain and affects the anchorage-independent growth of breast cancer cells.</title>
        <authorList>
            <person name="Sutherland B.W."/>
            <person name="Kucab J."/>
            <person name="Wu J."/>
            <person name="Lee C."/>
            <person name="Cheang M.C.U."/>
            <person name="Yorida E."/>
            <person name="Turbin D."/>
            <person name="Dedhar S."/>
            <person name="Nelson C."/>
            <person name="Pollak M."/>
            <person name="Leighton Grimes H."/>
            <person name="Miller K."/>
            <person name="Badve S."/>
            <person name="Huntsman D."/>
            <person name="Blake-Gilks C."/>
            <person name="Chen M."/>
            <person name="Pallen C.J."/>
            <person name="Dunn S.E."/>
        </authorList>
    </citation>
    <scope>PHOSPHORYLATION AT SER-102</scope>
    <scope>INTERACTION WITH AKT1</scope>
    <scope>SUBCELLULAR LOCATION</scope>
    <scope>MUTAGENESIS OF SER-102</scope>
</reference>
<reference key="16">
    <citation type="journal article" date="2006" name="Cell">
        <title>Global, in vivo, and site-specific phosphorylation dynamics in signaling networks.</title>
        <authorList>
            <person name="Olsen J.V."/>
            <person name="Blagoev B."/>
            <person name="Gnad F."/>
            <person name="Macek B."/>
            <person name="Kumar C."/>
            <person name="Mortensen P."/>
            <person name="Mann M."/>
        </authorList>
    </citation>
    <scope>PHOSPHORYLATION [LARGE SCALE ANALYSIS] AT SER-174 AND SER-176</scope>
    <scope>IDENTIFICATION BY MASS SPECTROMETRY [LARGE SCALE ANALYSIS]</scope>
    <source>
        <tissue>Cervix carcinoma</tissue>
    </source>
</reference>
<reference key="17">
    <citation type="journal article" date="2006" name="Nat. Biotechnol.">
        <title>A probability-based approach for high-throughput protein phosphorylation analysis and site localization.</title>
        <authorList>
            <person name="Beausoleil S.A."/>
            <person name="Villen J."/>
            <person name="Gerber S.A."/>
            <person name="Rush J."/>
            <person name="Gygi S.P."/>
        </authorList>
    </citation>
    <scope>IDENTIFICATION BY MASS SPECTROMETRY [LARGE SCALE ANALYSIS]</scope>
    <source>
        <tissue>Cervix carcinoma</tissue>
    </source>
</reference>
<reference key="18">
    <citation type="journal article" date="2007" name="EMBO Rep.">
        <title>Proteomic and functional analysis of Argonaute-containing mRNA-protein complexes in human cells.</title>
        <authorList>
            <person name="Hoeck J."/>
            <person name="Weinmann L."/>
            <person name="Ender C."/>
            <person name="Ruedel S."/>
            <person name="Kremmer E."/>
            <person name="Raabe M."/>
            <person name="Urlaub H."/>
            <person name="Meister G."/>
        </authorList>
    </citation>
    <scope>INTERACTION WITH AGO1 AND AGO2</scope>
</reference>
<reference key="19">
    <citation type="journal article" date="2007" name="Electrophoresis">
        <title>Toward a global characterization of the phosphoproteome in prostate cancer cells: identification of phosphoproteins in the LNCaP cell line.</title>
        <authorList>
            <person name="Giorgianni F."/>
            <person name="Zhao Y."/>
            <person name="Desiderio D.M."/>
            <person name="Beranova-Giorgianni S."/>
        </authorList>
    </citation>
    <scope>IDENTIFICATION BY MASS SPECTROMETRY [LARGE SCALE ANALYSIS]</scope>
    <source>
        <tissue>Prostate cancer</tissue>
    </source>
</reference>
<reference key="20">
    <citation type="journal article" date="2007" name="Mol. Cell. Proteomics">
        <title>Molecular composition of IMP1 ribonucleoprotein granules.</title>
        <authorList>
            <person name="Joeson L."/>
            <person name="Vikesaa J."/>
            <person name="Krogh A."/>
            <person name="Nielsen L.K."/>
            <person name="Hansen T."/>
            <person name="Borup R."/>
            <person name="Johnsen A.H."/>
            <person name="Christiansen J."/>
            <person name="Nielsen F.C."/>
        </authorList>
    </citation>
    <scope>IDENTIFICATION IN A MRNP GRANULE COMPLEX</scope>
    <scope>INTERACTION WITH IGF2BP1</scope>
    <scope>SUBCELLULAR LOCATION</scope>
    <scope>IDENTIFICATION BY MASS SPECTROMETRY</scope>
</reference>
<reference key="21">
    <citation type="journal article" date="2008" name="J. Mol. Biol.">
        <title>RBBP6 interacts with multifunctional protein YB-1 through its RING finger domain, leading to ubiquitination and proteosomal degradation of YB-1.</title>
        <authorList>
            <person name="Chibi M."/>
            <person name="Meyer M."/>
            <person name="Skepu A."/>
            <person name="Rees D.J.G."/>
            <person name="Moolman-Smook J.C."/>
            <person name="Pugh D.J."/>
        </authorList>
    </citation>
    <scope>INTERACTION WITH RBBP6</scope>
    <scope>UBIQUITINATION</scope>
</reference>
<reference key="22">
    <citation type="journal article" date="2008" name="J. Neurosci. Res.">
        <title>MBNL1 associates with YB-1 in cytoplasmic stress granules.</title>
        <authorList>
            <person name="Onishi H."/>
            <person name="Kino Y."/>
            <person name="Morita T."/>
            <person name="Futai E."/>
            <person name="Sasagawa N."/>
            <person name="Ishiura S."/>
        </authorList>
    </citation>
    <scope>INTERACTION WITH MBNL1</scope>
    <scope>SUBCELLULAR LOCATION</scope>
    <scope>IDENTIFICATION BY MASS SPECTROMETRY</scope>
</reference>
<reference key="23">
    <citation type="journal article" date="2008" name="Mol. Cell. Biol.">
        <title>Regulatory role of human AP-endonuclease (APE1/Ref-1) in YB-1-mediated activation of the multidrug resistance gene MDR1.</title>
        <authorList>
            <person name="Chattopadhyay R."/>
            <person name="Das S."/>
            <person name="Maiti A.K."/>
            <person name="Boldogh I."/>
            <person name="Xie J."/>
            <person name="Hazra T.K."/>
            <person name="Kohno K."/>
            <person name="Mitra S."/>
            <person name="Bhakat K.K."/>
        </authorList>
    </citation>
    <scope>FUNCTION</scope>
    <scope>DNA-BINDING</scope>
    <scope>INTERACTION WITH APEX1</scope>
</reference>
<reference key="24">
    <citation type="journal article" date="2008" name="Proc. Natl. Acad. Sci. U.S.A.">
        <title>A quantitative atlas of mitotic phosphorylation.</title>
        <authorList>
            <person name="Dephoure N."/>
            <person name="Zhou C."/>
            <person name="Villen J."/>
            <person name="Beausoleil S.A."/>
            <person name="Bakalarski C.E."/>
            <person name="Elledge S.J."/>
            <person name="Gygi S.P."/>
        </authorList>
    </citation>
    <scope>PHOSPHORYLATION [LARGE SCALE ANALYSIS] AT SER-174 AND SER-176</scope>
    <scope>IDENTIFICATION BY MASS SPECTROMETRY [LARGE SCALE ANALYSIS]</scope>
    <source>
        <tissue>Cervix carcinoma</tissue>
    </source>
</reference>
<reference key="25">
    <citation type="journal article" date="2009" name="Anal. Chem.">
        <title>Lys-N and trypsin cover complementary parts of the phosphoproteome in a refined SCX-based approach.</title>
        <authorList>
            <person name="Gauci S."/>
            <person name="Helbig A.O."/>
            <person name="Slijper M."/>
            <person name="Krijgsveld J."/>
            <person name="Heck A.J."/>
            <person name="Mohammed S."/>
        </authorList>
    </citation>
    <scope>ACETYLATION [LARGE SCALE ANALYSIS] AT SER-2</scope>
    <scope>CLEAVAGE OF INITIATOR METHIONINE [LARGE SCALE ANALYSIS]</scope>
    <scope>IDENTIFICATION BY MASS SPECTROMETRY [LARGE SCALE ANALYSIS]</scope>
</reference>
<reference key="26">
    <citation type="journal article" date="2009" name="EMBO Rep.">
        <title>Y-box protein-1 is actively secreted through a non-classical pathway and acts as an extracellular mitogen.</title>
        <authorList>
            <person name="Frye B.C."/>
            <person name="Halfter S."/>
            <person name="Djudjaj S."/>
            <person name="Muehlenberg P."/>
            <person name="Weber S."/>
            <person name="Raffetseder U."/>
            <person name="En-Nia A."/>
            <person name="Knott H."/>
            <person name="Baron J.M."/>
            <person name="Dooley S."/>
            <person name="Bernhagen J."/>
            <person name="Mertens P.R."/>
        </authorList>
    </citation>
    <scope>FUNCTION</scope>
    <scope>SUBCELLULAR LOCATION</scope>
    <scope>MUTAGENESIS OF LYS-301 AND LYS-304</scope>
    <scope>ACETYLATION AT LYS-301 AND LYS-304</scope>
</reference>
<reference key="27">
    <citation type="journal article" date="2009" name="Nat. Biotechnol.">
        <title>Rapid and systematic analysis of the RNA recognition specificities of RNA-binding proteins.</title>
        <authorList>
            <person name="Ray D."/>
            <person name="Kazan H."/>
            <person name="Chan E.T."/>
            <person name="Pena Castillo L."/>
            <person name="Chaudhry S."/>
            <person name="Talukder S."/>
            <person name="Blencowe B.J."/>
            <person name="Morris Q."/>
            <person name="Hughes T.R."/>
        </authorList>
    </citation>
    <scope>FUNCTION</scope>
    <scope>RNA-BINDING</scope>
</reference>
<reference key="28">
    <citation type="journal article" date="2009" name="RNA">
        <title>Control of c-myc mRNA stability by IGF2BP1-associated cytoplasmic RNPs.</title>
        <authorList>
            <person name="Weidensdorfer D."/>
            <person name="Stoehr N."/>
            <person name="Baude A."/>
            <person name="Lederer M."/>
            <person name="Koehn M."/>
            <person name="Schierhorn A."/>
            <person name="Buchmeier S."/>
            <person name="Wahle E."/>
            <person name="Huettelmaiery S."/>
        </authorList>
    </citation>
    <scope>FUNCTION</scope>
    <scope>COMPONENT OF THE CRD-MEDIATED MRNA STABILIZATION COMPLEX</scope>
    <scope>IDENTIFICATION IN A MRNP COMPLEX</scope>
    <scope>SUBCELLULAR LOCATION</scope>
    <scope>IDENTIFICATION BY MASS SPECTROMETRY</scope>
</reference>
<reference key="29">
    <citation type="journal article" date="2009" name="Sci. Signal.">
        <title>Quantitative phosphoproteomic analysis of T cell receptor signaling reveals system-wide modulation of protein-protein interactions.</title>
        <authorList>
            <person name="Mayya V."/>
            <person name="Lundgren D.H."/>
            <person name="Hwang S.-I."/>
            <person name="Rezaul K."/>
            <person name="Wu L."/>
            <person name="Eng J.K."/>
            <person name="Rodionov V."/>
            <person name="Han D.K."/>
        </authorList>
    </citation>
    <scope>PHOSPHORYLATION [LARGE SCALE ANALYSIS] AT SER-102; SER-165; SER-167; SER-174 AND SER-176</scope>
    <scope>IDENTIFICATION BY MASS SPECTROMETRY [LARGE SCALE ANALYSIS]</scope>
    <source>
        <tissue>Leukemic T-cell</tissue>
    </source>
</reference>
<reference key="30">
    <citation type="journal article" date="2010" name="Sci. Signal.">
        <title>Quantitative phosphoproteomics reveals widespread full phosphorylation site occupancy during mitosis.</title>
        <authorList>
            <person name="Olsen J.V."/>
            <person name="Vermeulen M."/>
            <person name="Santamaria A."/>
            <person name="Kumar C."/>
            <person name="Miller M.L."/>
            <person name="Jensen L.J."/>
            <person name="Gnad F."/>
            <person name="Cox J."/>
            <person name="Jensen T.S."/>
            <person name="Nigg E.A."/>
            <person name="Brunak S."/>
            <person name="Mann M."/>
        </authorList>
    </citation>
    <scope>PHOSPHORYLATION [LARGE SCALE ANALYSIS] AT SER-165; SER-167; SER-174 AND SER-176</scope>
    <scope>IDENTIFICATION BY MASS SPECTROMETRY [LARGE SCALE ANALYSIS]</scope>
    <source>
        <tissue>Cervix carcinoma</tissue>
    </source>
</reference>
<reference key="31">
    <citation type="journal article" date="2011" name="BMC Syst. Biol.">
        <title>Initial characterization of the human central proteome.</title>
        <authorList>
            <person name="Burkard T.R."/>
            <person name="Planyavsky M."/>
            <person name="Kaupe I."/>
            <person name="Breitwieser F.P."/>
            <person name="Buerckstuemmer T."/>
            <person name="Bennett K.L."/>
            <person name="Superti-Furga G."/>
            <person name="Colinge J."/>
        </authorList>
    </citation>
    <scope>IDENTIFICATION BY MASS SPECTROMETRY [LARGE SCALE ANALYSIS]</scope>
</reference>
<reference key="32">
    <citation type="journal article" date="2011" name="Sci. Signal.">
        <title>System-wide temporal characterization of the proteome and phosphoproteome of human embryonic stem cell differentiation.</title>
        <authorList>
            <person name="Rigbolt K.T."/>
            <person name="Prokhorova T.A."/>
            <person name="Akimov V."/>
            <person name="Henningsen J."/>
            <person name="Johansen P.T."/>
            <person name="Kratchmarova I."/>
            <person name="Kassem M."/>
            <person name="Mann M."/>
            <person name="Olsen J.V."/>
            <person name="Blagoev B."/>
        </authorList>
    </citation>
    <scope>PHOSPHORYLATION [LARGE SCALE ANALYSIS] AT SER-165; SER-167; SER-174; SER-176 AND SER-314</scope>
    <scope>IDENTIFICATION BY MASS SPECTROMETRY [LARGE SCALE ANALYSIS]</scope>
</reference>
<reference key="33">
    <citation type="journal article" date="2013" name="J. Proteome Res.">
        <title>Toward a comprehensive characterization of a human cancer cell phosphoproteome.</title>
        <authorList>
            <person name="Zhou H."/>
            <person name="Di Palma S."/>
            <person name="Preisinger C."/>
            <person name="Peng M."/>
            <person name="Polat A.N."/>
            <person name="Heck A.J."/>
            <person name="Mohammed S."/>
        </authorList>
    </citation>
    <scope>PHOSPHORYLATION [LARGE SCALE ANALYSIS] AT SER-165; SER-174; SER-176 AND SER-314</scope>
    <scope>IDENTIFICATION BY MASS SPECTROMETRY [LARGE SCALE ANALYSIS]</scope>
    <source>
        <tissue>Cervix carcinoma</tissue>
        <tissue>Erythroleukemia</tissue>
    </source>
</reference>
<reference key="34">
    <citation type="journal article" date="2014" name="Biochim. Biophys. Acta">
        <title>DERA is the human deoxyribose phosphate aldolase and is involved in stress response.</title>
        <authorList>
            <person name="Salleron L."/>
            <person name="Magistrelli G."/>
            <person name="Mary C."/>
            <person name="Fischer N."/>
            <person name="Bairoch A."/>
            <person name="Lane L."/>
        </authorList>
    </citation>
    <scope>INTERACTION WITH DERA</scope>
    <scope>SUBCELLULAR LOCATION</scope>
</reference>
<reference key="35">
    <citation type="journal article" date="2014" name="J. Proteomics">
        <title>An enzyme assisted RP-RPLC approach for in-depth analysis of human liver phosphoproteome.</title>
        <authorList>
            <person name="Bian Y."/>
            <person name="Song C."/>
            <person name="Cheng K."/>
            <person name="Dong M."/>
            <person name="Wang F."/>
            <person name="Huang J."/>
            <person name="Sun D."/>
            <person name="Wang L."/>
            <person name="Ye M."/>
            <person name="Zou H."/>
        </authorList>
    </citation>
    <scope>PHOSPHORYLATION [LARGE SCALE ANALYSIS] AT SER-167; SER-174 AND SER-176</scope>
    <scope>IDENTIFICATION BY MASS SPECTROMETRY [LARGE SCALE ANALYSIS]</scope>
    <source>
        <tissue>Liver</tissue>
    </source>
</reference>
<reference key="36">
    <citation type="journal article" date="2015" name="Proteomics">
        <title>N-terminome analysis of the human mitochondrial proteome.</title>
        <authorList>
            <person name="Vaca Jacome A.S."/>
            <person name="Rabilloud T."/>
            <person name="Schaeffer-Reiss C."/>
            <person name="Rompais M."/>
            <person name="Ayoub D."/>
            <person name="Lane L."/>
            <person name="Bairoch A."/>
            <person name="Van Dorsselaer A."/>
            <person name="Carapito C."/>
        </authorList>
    </citation>
    <scope>IDENTIFICATION BY MASS SPECTROMETRY [LARGE SCALE ANALYSIS]</scope>
</reference>
<reference key="37">
    <citation type="journal article" date="2016" name="Biol. Chem.">
        <title>Two new isoforms of the human hepatoma-derived growth factor interact with components of the cytoskeleton.</title>
        <authorList>
            <person name="Nuesse J."/>
            <person name="Mirastschijski U."/>
            <person name="Waespy M."/>
            <person name="Oetjen J."/>
            <person name="Brandes N."/>
            <person name="Rebello O."/>
            <person name="Paroni F."/>
            <person name="Kelm S."/>
            <person name="Dietz F."/>
        </authorList>
    </citation>
    <scope>INTERACTION WITH HDGF</scope>
</reference>
<reference key="38">
    <citation type="journal article" date="2016" name="Elife">
        <title>Y-box protein 1 is required to sort microRNAs into exosomes in cells and in a cell-free reaction.</title>
        <authorList>
            <person name="Shurtleff M.J."/>
            <person name="Temoche-Diaz M.M."/>
            <person name="Karfilis K.V."/>
            <person name="Ri S."/>
            <person name="Schekman R."/>
        </authorList>
    </citation>
    <scope>FUNCTION</scope>
    <scope>SUBCELLULAR LOCATION</scope>
</reference>
<reference key="39">
    <citation type="journal article" date="2017" name="Biochim. Biophys. Acta">
        <title>Cytosolic YB-1 and NSUN2 are the only proteins recognizing specific motifs present in mRNAs enriched in exosomes.</title>
        <authorList>
            <person name="Kossinova O.A."/>
            <person name="Gopanenko A.V."/>
            <person name="Tamkovich S.N."/>
            <person name="Krasheninina O.A."/>
            <person name="Tupikin A.E."/>
            <person name="Kiseleva E."/>
            <person name="Yanshina D.D."/>
            <person name="Malygin A.A."/>
            <person name="Ven'yaminova A.G."/>
            <person name="Kabilov M.R."/>
            <person name="Karpova G.G."/>
        </authorList>
    </citation>
    <scope>FUNCTION</scope>
    <scope>SUBCELLULAR LOCATION</scope>
    <scope>RNA-BINDING</scope>
</reference>
<reference key="40">
    <citation type="journal article" date="2017" name="Nat. Struct. Mol. Biol.">
        <title>Site-specific mapping of the human SUMO proteome reveals co-modification with phosphorylation.</title>
        <authorList>
            <person name="Hendriks I.A."/>
            <person name="Lyon D."/>
            <person name="Young C."/>
            <person name="Jensen L.J."/>
            <person name="Vertegaal A.C."/>
            <person name="Nielsen M.L."/>
        </authorList>
    </citation>
    <scope>SUMOYLATION [LARGE SCALE ANALYSIS] AT LYS-26</scope>
    <scope>IDENTIFICATION BY MASS SPECTROMETRY [LARGE SCALE ANALYSIS]</scope>
</reference>
<reference key="41">
    <citation type="journal article" date="2017" name="Proc. Natl. Acad. Sci. U.S.A.">
        <title>Broad role for YBX1 in defining the small noncoding RNA composition of exosomes.</title>
        <authorList>
            <person name="Shurtleff M.J."/>
            <person name="Yao J."/>
            <person name="Qin Y."/>
            <person name="Nottingham R.M."/>
            <person name="Temoche-Diaz M.M."/>
            <person name="Schekman R."/>
            <person name="Lambowitz A.M."/>
        </authorList>
    </citation>
    <scope>FUNCTION</scope>
</reference>
<reference key="42">
    <citation type="journal article" date="2018" name="Nat. Commun.">
        <title>The RNA-binding protein YBX1 regulates epidermal progenitors at a posttranscriptional level.</title>
        <authorList>
            <person name="Kwon E."/>
            <person name="Todorova K."/>
            <person name="Wang J."/>
            <person name="Horos R."/>
            <person name="Lee K.K."/>
            <person name="Neel V.A."/>
            <person name="Negri G.L."/>
            <person name="Sorensen P.H."/>
            <person name="Lee S.W."/>
            <person name="Hentze M.W."/>
            <person name="Mandinova A."/>
        </authorList>
    </citation>
    <scope>FUNCTION</scope>
</reference>
<reference key="43">
    <citation type="journal article" date="2002" name="J. Mol. Biol.">
        <title>The solution structure and DNA-binding properties of the cold-shock domain of the human Y-box protein YB-1.</title>
        <authorList>
            <person name="Kloks C.P.A.M."/>
            <person name="Spronk C.A.E.M."/>
            <person name="Lasonder E."/>
            <person name="Hoffmann A."/>
            <person name="Vuister G.W."/>
            <person name="Grzesiek S."/>
            <person name="Hilbers C.W."/>
        </authorList>
    </citation>
    <scope>STRUCTURE BY NMR OF 52-129</scope>
    <scope>INTERACTION WITH SS-DNA</scope>
</reference>
<reference evidence="35" key="44">
    <citation type="journal article" date="2019" name="Nat. Cell Biol.">
        <title>5-methylcytosine promotes pathogenesis of bladder cancer through stabilizing mRNAs.</title>
        <authorList>
            <person name="Chen X."/>
            <person name="Li A."/>
            <person name="Sun B.F."/>
            <person name="Yang Y."/>
            <person name="Han Y.N."/>
            <person name="Yuan X."/>
            <person name="Chen R.X."/>
            <person name="Wei W.S."/>
            <person name="Liu Y."/>
            <person name="Gao C.C."/>
            <person name="Chen Y.S."/>
            <person name="Zhang M."/>
            <person name="Ma X.D."/>
            <person name="Liu Z.W."/>
            <person name="Luo J.H."/>
            <person name="Lyu C."/>
            <person name="Wang H.L."/>
            <person name="Ma J."/>
            <person name="Zhao Y.L."/>
            <person name="Zhou F.J."/>
            <person name="Huang Y."/>
            <person name="Xie D."/>
            <person name="Yang Y.G."/>
        </authorList>
    </citation>
    <scope>X-RAY CRYSTALLOGRAPHY (1.78 ANGSTROMS) OF 50-130 IN COMPLEX WITH METHYLATED RNA</scope>
    <scope>FUNCTION</scope>
    <scope>INTERACTION WITH ELAVL1</scope>
    <scope>DOMAIN</scope>
    <scope>MUTAGENESIS OF TRP-65</scope>
</reference>
<protein>
    <recommendedName>
        <fullName evidence="31">Y-box-binding protein 1</fullName>
        <shortName evidence="31">YB-1</shortName>
    </recommendedName>
    <alternativeName>
        <fullName>CCAAT-binding transcription factor I subunit A</fullName>
        <shortName>CBF-A</shortName>
    </alternativeName>
    <alternativeName>
        <fullName evidence="1">DNA-binding protein B</fullName>
        <shortName evidence="1">DBPB</shortName>
    </alternativeName>
    <alternativeName>
        <fullName evidence="2">Enhancer factor I subunit A</fullName>
        <shortName evidence="2">EFI-A</shortName>
    </alternativeName>
    <alternativeName>
        <fullName evidence="32">Nuclease-sensitive element-binding protein 1</fullName>
    </alternativeName>
    <alternativeName>
        <fullName>Y-box transcription factor</fullName>
    </alternativeName>
</protein>
<keyword id="KW-0002">3D-structure</keyword>
<keyword id="KW-0007">Acetylation</keyword>
<keyword id="KW-0010">Activator</keyword>
<keyword id="KW-0963">Cytoplasm</keyword>
<keyword id="KW-0903">Direct protein sequencing</keyword>
<keyword id="KW-0238">DNA-binding</keyword>
<keyword id="KW-1017">Isopeptide bond</keyword>
<keyword id="KW-0497">Mitogen</keyword>
<keyword id="KW-0507">mRNA processing</keyword>
<keyword id="KW-0508">mRNA splicing</keyword>
<keyword id="KW-0539">Nucleus</keyword>
<keyword id="KW-0597">Phosphoprotein</keyword>
<keyword id="KW-1267">Proteomics identification</keyword>
<keyword id="KW-1185">Reference proteome</keyword>
<keyword id="KW-0678">Repressor</keyword>
<keyword id="KW-0694">RNA-binding</keyword>
<keyword id="KW-0964">Secreted</keyword>
<keyword id="KW-0804">Transcription</keyword>
<keyword id="KW-0805">Transcription regulation</keyword>
<keyword id="KW-0832">Ubl conjugation</keyword>
<comment type="function">
    <text evidence="1 3 5 6 8 10 17 19 20 21 24 25 26 27 28 29">DNA- and RNA-binding protein involved in various processes, such as translational repression, RNA stabilization, mRNA splicing, DNA repair and transcription regulation (PubMed:10817758, PubMed:11698476, PubMed:14718551, PubMed:18809583, PubMed:31358969, PubMed:8188694). Predominantly acts as a RNA-binding protein: binds preferentially to the 5'-[CU]CUGCG-3' RNA motif and specifically recognizes mRNA transcripts modified by C5-methylcytosine (m5C) (PubMed:19561594, PubMed:31358969). Promotes mRNA stabilization: acts by binding to m5C-containing mRNAs and recruiting the mRNA stability maintainer ELAVL1, thereby preventing mRNA decay (PubMed:10817758, PubMed:11698476, PubMed:31358969). Component of the CRD-mediated complex that promotes MYC mRNA stability (PubMed:19029303). Contributes to the regulation of translation by modulating the interaction between the mRNA and eukaryotic initiation factors (By similarity). Plays a key role in RNA composition of extracellular exosomes by defining the sorting of small non-coding RNAs, such as tRNAs, Y RNAs, Vault RNAs and miRNAs (PubMed:27559612, PubMed:29073095). Probably sorts RNAs in exosomes by recognizing and binding C5-methylcytosine (m5C)-containing RNAs (PubMed:28341602, PubMed:29073095). Acts as a key effector of epidermal progenitors by preventing epidermal progenitor senescence: acts by regulating the translation of a senescence-associated subset of cytokine mRNAs, possibly by binding to m5C-containing mRNAs (PubMed:29712925). Also involved in pre-mRNA alternative splicing regulation: binds to splice sites in pre-mRNA and regulates splice site selection (PubMed:12604611). Binds to TSC22D1 transcripts, thereby inhibiting their translation and negatively regulating TGF-beta-mediated transcription of COL1A2 (By similarity). Also able to bind DNA: regulates transcription of the multidrug resistance gene MDR1 is enhanced in presence of the APEX1 acetylated form at 'Lys-6' and 'Lys-7' (PubMed:18809583). Binds to promoters that contain a Y-box (5'-CTGATTGGCCAA-3'), such as MDR1 and HLA class II genes (PubMed:18809583, PubMed:8188694). Promotes separation of DNA strands that contain mismatches or are modified by cisplatin (PubMed:14718551). Has endonucleolytic activity and can introduce nicks or breaks into double-stranded DNA, suggesting a role in DNA repair (PubMed:14718551). The secreted form acts as an extracellular mitogen and stimulates cell migration and proliferation (PubMed:19483673).</text>
</comment>
<comment type="subunit">
    <text evidence="1 5 7 8 9 10 11 12 13 14 15 16 17 18 19 22 23 28">Homodimer in the presence of ATP (PubMed:10817758, PubMed:11851341). Component of the coding region determinant (CRD)-mediated complex, composed of DHX9, HNRNPU, IGF2BP1, SYNCRIP and YBX1 (PubMed:19029303). Identified in a IGF2BP1-dependent mRNP granule complex containing untranslated mRNAs (PubMed:17289661). Component of the U11/U12 snRNPs that are part of the U12-type spliceosome (PubMed:15146077). Identified in a histone pre-mRNA complex, at least composed of ERI1, LSM11, SLBP, SNRPB, SYNCRIP and YBX1 (By similarity). Interacts with IGF2BP1 and RBBP6 (PubMed:17289661, PubMed:18851979). Component of cytoplasmic messenger ribonucleoprotein particles (mRNPs) (PubMed:19029303). Interacts with AKT1, MBNL1, SFRS9, SFRS12, ALYREF/THOC4, MSH2, XRCC5, WRN and NCL (PubMed:12604611, PubMed:14559993, PubMed:14718551, PubMed:15806160, PubMed:18335541). Interacts (via C-terminus) with APEX1 (via N-terminus); the interaction is increased with APEX1 acetylated at 'Lys-6' and 'Lys-7' (PubMed:18809583). Interacts with AGO1 and AGO2 (PubMed:17932509). Interacts with ANKRD2 (PubMed:15136035). Interacts with DERA (PubMed:25229427). Interacts with FMR1; this interaction occurs in association with polyribosome (By similarity). Interacts with ZBTB7B (By similarity). Interacts with HDGF (isoform 1) (PubMed:26845719). Interacts with ELAVL1; leading to ELAVL1 recruitment on C5-methylcytosine (m5C)-containing mRNAs and subsequent mRNA stability (PubMed:31358969). Interacts with PURB (By similarity).</text>
</comment>
<comment type="interaction">
    <interactant intactId="EBI-354065">
        <id>P67809</id>
    </interactant>
    <interactant intactId="EBI-347528">
        <id>Q07021</id>
        <label>C1QBP</label>
    </interactant>
    <organismsDiffer>false</organismsDiffer>
    <experiments>13</experiments>
</comment>
<comment type="interaction">
    <interactant intactId="EBI-354065">
        <id>P67809</id>
    </interactant>
    <interactant intactId="EBI-359390">
        <id>Q13616</id>
        <label>CUL1</label>
    </interactant>
    <organismsDiffer>false</organismsDiffer>
    <experiments>2</experiments>
</comment>
<comment type="interaction">
    <interactant intactId="EBI-354065">
        <id>P67809</id>
    </interactant>
    <interactant intactId="EBI-352022">
        <id>Q08211</id>
        <label>DHX9</label>
    </interactant>
    <organismsDiffer>false</organismsDiffer>
    <experiments>11</experiments>
</comment>
<comment type="interaction">
    <interactant intactId="EBI-354065">
        <id>P67809</id>
    </interactant>
    <interactant intactId="EBI-447295">
        <id>Q09472</id>
        <label>EP300</label>
    </interactant>
    <organismsDiffer>false</organismsDiffer>
    <experiments>2</experiments>
</comment>
<comment type="interaction">
    <interactant intactId="EBI-354065">
        <id>P67809</id>
    </interactant>
    <interactant intactId="EBI-8555452">
        <id>Q7Z6M2</id>
        <label>FBXO33</label>
    </interactant>
    <organismsDiffer>false</organismsDiffer>
    <experiments>6</experiments>
</comment>
<comment type="interaction">
    <interactant intactId="EBI-354065">
        <id>P67809</id>
    </interactant>
    <interactant intactId="EBI-432545">
        <id>Q14103-4</id>
        <label>HNRNPD</label>
    </interactant>
    <organismsDiffer>false</organismsDiffer>
    <experiments>3</experiments>
</comment>
<comment type="interaction">
    <interactant intactId="EBI-354065">
        <id>P67809</id>
    </interactant>
    <interactant intactId="EBI-348239">
        <id>P62310</id>
        <label>LSM3</label>
    </interactant>
    <organismsDiffer>false</organismsDiffer>
    <experiments>2</experiments>
</comment>
<comment type="interaction">
    <interactant intactId="EBI-354065">
        <id>P67809</id>
    </interactant>
    <interactant intactId="EBI-1175211">
        <id>Q99697</id>
        <label>PITX2</label>
    </interactant>
    <organismsDiffer>false</organismsDiffer>
    <experiments>3</experiments>
</comment>
<comment type="interaction">
    <interactant intactId="EBI-354065">
        <id>P67809</id>
    </interactant>
    <interactant intactId="EBI-725702">
        <id>O15355</id>
        <label>PPM1G</label>
    </interactant>
    <organismsDiffer>false</organismsDiffer>
    <experiments>2</experiments>
</comment>
<comment type="interaction">
    <interactant intactId="EBI-354065">
        <id>P67809</id>
    </interactant>
    <interactant intactId="EBI-372899">
        <id>Q13148</id>
        <label>TARDBP</label>
    </interactant>
    <organismsDiffer>false</organismsDiffer>
    <experiments>6</experiments>
</comment>
<comment type="interaction">
    <interactant intactId="EBI-354065">
        <id>P67809</id>
    </interactant>
    <interactant intactId="EBI-1783169">
        <id>P13693</id>
        <label>TPT1</label>
    </interactant>
    <organismsDiffer>false</organismsDiffer>
    <experiments>4</experiments>
</comment>
<comment type="interaction">
    <interactant intactId="EBI-354065">
        <id>P67809</id>
    </interactant>
    <interactant intactId="EBI-932806">
        <id>Q08705</id>
        <label>CTCF</label>
    </interactant>
    <organismsDiffer>true</organismsDiffer>
    <experiments>2</experiments>
</comment>
<comment type="interaction">
    <interactant intactId="EBI-354065">
        <id>P67809</id>
    </interactant>
    <interactant intactId="EBI-10901281">
        <id>PRO_0000038050</id>
        <dbReference type="UniProtKB" id="P19712"/>
    </interactant>
    <organismsDiffer>true</organismsDiffer>
    <experiments>4</experiments>
</comment>
<comment type="subcellular location">
    <subcellularLocation>
        <location evidence="8 10 13">Cytoplasm</location>
    </subcellularLocation>
    <subcellularLocation>
        <location evidence="8 10 13">Nucleus</location>
    </subcellularLocation>
    <subcellularLocation>
        <location evidence="14 16 19 22">Cytoplasmic granule</location>
    </subcellularLocation>
    <subcellularLocation>
        <location evidence="20">Secreted</location>
    </subcellularLocation>
    <subcellularLocation>
        <location evidence="24 25">Secreted</location>
        <location evidence="24 25">Extracellular exosome</location>
    </subcellularLocation>
    <subcellularLocation>
        <location evidence="1">Cytoplasm</location>
        <location evidence="1">P-body</location>
    </subcellularLocation>
    <text evidence="8 10 16 20 22">Predominantly cytoplasmic in proliferating cells (PubMed:12604611). Cytotoxic stress and DNA damage enhance translocation to the nucleus (PubMed:14718551). Localized in cytoplasmic mRNP granules containing untranslated mRNAs (PubMed:25229427). Shuttles between nucleus and cytoplasm (PubMed:25229427). Localized with DDX1, MBNL1 and TIAL1 in stress granules upon stress (PubMed:18335541). Secreted by mesangial and monocytic cells after inflammatory challenges (PubMed:19483673).</text>
</comment>
<comment type="domain">
    <text evidence="28">In the CSD domain, Trp-65 specifically recognizes C5-methylcytosine (m5C) modification through its indole ring.</text>
</comment>
<comment type="PTM">
    <text evidence="18">Ubiquitinated by RBBP6; leading to a decrease of YBX1 transactivational ability.</text>
</comment>
<comment type="PTM">
    <text evidence="3 13 30">Phosphorylated; increased by TGFB1 treatment (Ref.6). Phosphorylation by PKB/AKT1 reduces interaction with cytoplasmic mRNA (By similarity). In the absence of phosphorylation the protein is retained in the cytoplasm (PubMed:15806160).</text>
</comment>
<comment type="PTM">
    <text evidence="3">Cleaved by a 20S proteasomal protease in response to agents that damage DNA. Cleavage takes place in the absence of ubiquitination and ATP. The resulting N-terminal fragment accumulates in the nucleus (By similarity).</text>
</comment>
<comment type="similarity">
    <text evidence="33">Belongs to the YBX1 family.</text>
</comment>
<comment type="sequence caution" evidence="33">
    <conflict type="erroneous initiation">
        <sequence resource="EMBL-CDS" id="AAA35750"/>
    </conflict>
    <text>Extended N-terminus.</text>
</comment>
<comment type="sequence caution" evidence="33">
    <conflict type="frameshift">
        <sequence resource="EMBL-CDS" id="AAA59949"/>
    </conflict>
</comment>
<comment type="sequence caution" evidence="33">
    <conflict type="frameshift">
        <sequence resource="EMBL-CDS" id="AAA61308"/>
    </conflict>
</comment>
<comment type="online information" name="Atlas of Genetics and Cytogenetics in Oncology and Haematology">
    <link uri="https://atlasgeneticsoncology.org/gene/46554/YBX1"/>
</comment>
<gene>
    <name evidence="34" type="primary">YBX1</name>
    <name evidence="32" type="synonym">NSEP1</name>
    <name evidence="31" type="synonym">YB1</name>
</gene>
<accession>P67809</accession>
<accession>P16990</accession>
<accession>P16991</accession>
<accession>Q14972</accession>
<accession>Q15325</accession>
<accession>Q5FVF0</accession>
<feature type="initiator methionine" description="Removed" evidence="30 39">
    <location>
        <position position="1"/>
    </location>
</feature>
<feature type="chain" id="PRO_0000100219" description="Y-box-binding protein 1">
    <location>
        <begin position="2"/>
        <end position="324"/>
    </location>
</feature>
<feature type="domain" description="CSD">
    <location>
        <begin position="61"/>
        <end position="125"/>
    </location>
</feature>
<feature type="region of interest" description="Disordered" evidence="4">
    <location>
        <begin position="1"/>
        <end position="49"/>
    </location>
</feature>
<feature type="region of interest" description="Interaction with ss-DNA" evidence="7">
    <location>
        <begin position="15"/>
        <end position="71"/>
    </location>
</feature>
<feature type="region of interest" description="C5-methylcytosine binding" evidence="28 35">
    <location>
        <begin position="65"/>
        <end position="70"/>
    </location>
</feature>
<feature type="region of interest" description="Disordered" evidence="4">
    <location>
        <begin position="120"/>
        <end position="324"/>
    </location>
</feature>
<feature type="compositionally biased region" description="Gly residues" evidence="4">
    <location>
        <begin position="30"/>
        <end position="41"/>
    </location>
</feature>
<feature type="compositionally biased region" description="Basic residues" evidence="4">
    <location>
        <begin position="144"/>
        <end position="154"/>
    </location>
</feature>
<feature type="compositionally biased region" description="Low complexity" evidence="4">
    <location>
        <begin position="155"/>
        <end position="166"/>
    </location>
</feature>
<feature type="compositionally biased region" description="Low complexity" evidence="4">
    <location>
        <begin position="194"/>
        <end position="208"/>
    </location>
</feature>
<feature type="compositionally biased region" description="Basic residues" evidence="4">
    <location>
        <begin position="241"/>
        <end position="250"/>
    </location>
</feature>
<feature type="compositionally biased region" description="Basic residues" evidence="4">
    <location>
        <begin position="279"/>
        <end position="291"/>
    </location>
</feature>
<feature type="compositionally biased region" description="Basic and acidic residues" evidence="4">
    <location>
        <begin position="292"/>
        <end position="305"/>
    </location>
</feature>
<feature type="site" description="Important for C5-methylcytosine-recognition" evidence="28">
    <location>
        <position position="65"/>
    </location>
</feature>
<feature type="site" description="Cleavage; by 20S proteasomal protease" evidence="3">
    <location>
        <begin position="219"/>
        <end position="220"/>
    </location>
</feature>
<feature type="modified residue" description="N-acetylserine" evidence="30 39">
    <location>
        <position position="2"/>
    </location>
</feature>
<feature type="modified residue" description="Phosphoserine; by PKB/AKT1" evidence="13 40">
    <location>
        <position position="102"/>
    </location>
</feature>
<feature type="modified residue" description="Phosphotyrosine" evidence="36">
    <location>
        <position position="162"/>
    </location>
</feature>
<feature type="modified residue" description="Phosphoserine" evidence="30 40 41 42 43">
    <location>
        <position position="165"/>
    </location>
</feature>
<feature type="modified residue" description="Phosphoserine" evidence="40 41 42 44">
    <location>
        <position position="167"/>
    </location>
</feature>
<feature type="modified residue" description="Phosphoserine" evidence="37 38 40 41 42 43 44">
    <location>
        <position position="174"/>
    </location>
</feature>
<feature type="modified residue" description="Phosphoserine" evidence="37 38 40 41 42 43 44">
    <location>
        <position position="176"/>
    </location>
</feature>
<feature type="modified residue" description="N6-acetyllysine" evidence="20">
    <location>
        <position position="301"/>
    </location>
</feature>
<feature type="modified residue" description="N6-acetyllysine" evidence="20">
    <location>
        <position position="304"/>
    </location>
</feature>
<feature type="modified residue" description="Phosphoserine" evidence="42 43">
    <location>
        <position position="314"/>
    </location>
</feature>
<feature type="cross-link" description="Glycyl lysine isopeptide (Lys-Gly) (interchain with G-Cter in SUMO2)" evidence="45">
    <location>
        <position position="26"/>
    </location>
</feature>
<feature type="cross-link" description="Glycyl lysine isopeptide (Lys-Gly) (interchain with G-Cter in ubiquitin)" evidence="18">
    <location>
        <position position="137"/>
    </location>
</feature>
<feature type="mutagenesis site" description="Abolished binding to C5-methylcytosine (m5C)-containing mRNAs." evidence="28">
    <original>W</original>
    <variation>A</variation>
    <location>
        <position position="65"/>
    </location>
</feature>
<feature type="mutagenesis site" description="Decreased binding to C5-methylcytosine (m5C)-containing mRNAs. Decreased ability to discriminate between m5C-containing and unmethylated mRNAs." evidence="28">
    <original>W</original>
    <variation>F</variation>
    <location>
        <position position="65"/>
    </location>
</feature>
<feature type="mutagenesis site" description="Loss of phosphorylation by PKB/AKT1. Inhibits translocation to the nucleus and tumor cell growth." evidence="13">
    <original>S</original>
    <variation>A</variation>
    <location>
        <position position="102"/>
    </location>
</feature>
<feature type="mutagenesis site" description="Abrogates unconventional secretion." evidence="20">
    <original>K</original>
    <variation>A</variation>
    <location>
        <position position="301"/>
    </location>
</feature>
<feature type="mutagenesis site" description="Abrogates unconventional secretion." evidence="20">
    <original>K</original>
    <variation>A</variation>
    <location>
        <position position="304"/>
    </location>
</feature>
<feature type="sequence conflict" description="In Ref. 2; AAA61308." evidence="33" ref="2">
    <original>A</original>
    <variation>E</variation>
    <location>
        <position position="120"/>
    </location>
</feature>
<feature type="strand" evidence="46">
    <location>
        <begin position="54"/>
        <end position="67"/>
    </location>
</feature>
<feature type="turn" evidence="46">
    <location>
        <begin position="68"/>
        <end position="71"/>
    </location>
</feature>
<feature type="strand" evidence="46">
    <location>
        <begin position="72"/>
        <end position="77"/>
    </location>
</feature>
<feature type="turn" evidence="46">
    <location>
        <begin position="78"/>
        <end position="80"/>
    </location>
</feature>
<feature type="strand" evidence="46">
    <location>
        <begin position="83"/>
        <end position="87"/>
    </location>
</feature>
<feature type="helix" evidence="46">
    <location>
        <begin position="88"/>
        <end position="90"/>
    </location>
</feature>
<feature type="strand" evidence="48">
    <location>
        <begin position="96"/>
        <end position="98"/>
    </location>
</feature>
<feature type="strand" evidence="46">
    <location>
        <begin position="108"/>
        <end position="116"/>
    </location>
</feature>
<feature type="strand" evidence="46">
    <location>
        <begin position="119"/>
        <end position="126"/>
    </location>
</feature>
<feature type="helix" evidence="47">
    <location>
        <begin position="128"/>
        <end position="130"/>
    </location>
</feature>
<evidence type="ECO:0000250" key="1">
    <source>
        <dbReference type="UniProtKB" id="P62960"/>
    </source>
</evidence>
<evidence type="ECO:0000250" key="2">
    <source>
        <dbReference type="UniProtKB" id="P62961"/>
    </source>
</evidence>
<evidence type="ECO:0000250" key="3">
    <source>
        <dbReference type="UniProtKB" id="Q28618"/>
    </source>
</evidence>
<evidence type="ECO:0000256" key="4">
    <source>
        <dbReference type="SAM" id="MobiDB-lite"/>
    </source>
</evidence>
<evidence type="ECO:0000269" key="5">
    <source>
    </source>
</evidence>
<evidence type="ECO:0000269" key="6">
    <source>
    </source>
</evidence>
<evidence type="ECO:0000269" key="7">
    <source>
    </source>
</evidence>
<evidence type="ECO:0000269" key="8">
    <source>
    </source>
</evidence>
<evidence type="ECO:0000269" key="9">
    <source>
    </source>
</evidence>
<evidence type="ECO:0000269" key="10">
    <source>
    </source>
</evidence>
<evidence type="ECO:0000269" key="11">
    <source>
    </source>
</evidence>
<evidence type="ECO:0000269" key="12">
    <source>
    </source>
</evidence>
<evidence type="ECO:0000269" key="13">
    <source>
    </source>
</evidence>
<evidence type="ECO:0000269" key="14">
    <source>
    </source>
</evidence>
<evidence type="ECO:0000269" key="15">
    <source>
    </source>
</evidence>
<evidence type="ECO:0000269" key="16">
    <source>
    </source>
</evidence>
<evidence type="ECO:0000269" key="17">
    <source>
    </source>
</evidence>
<evidence type="ECO:0000269" key="18">
    <source>
    </source>
</evidence>
<evidence type="ECO:0000269" key="19">
    <source>
    </source>
</evidence>
<evidence type="ECO:0000269" key="20">
    <source>
    </source>
</evidence>
<evidence type="ECO:0000269" key="21">
    <source>
    </source>
</evidence>
<evidence type="ECO:0000269" key="22">
    <source>
    </source>
</evidence>
<evidence type="ECO:0000269" key="23">
    <source>
    </source>
</evidence>
<evidence type="ECO:0000269" key="24">
    <source>
    </source>
</evidence>
<evidence type="ECO:0000269" key="25">
    <source>
    </source>
</evidence>
<evidence type="ECO:0000269" key="26">
    <source>
    </source>
</evidence>
<evidence type="ECO:0000269" key="27">
    <source>
    </source>
</evidence>
<evidence type="ECO:0000269" key="28">
    <source>
    </source>
</evidence>
<evidence type="ECO:0000269" key="29">
    <source>
    </source>
</evidence>
<evidence type="ECO:0000269" key="30">
    <source ref="6"/>
</evidence>
<evidence type="ECO:0000303" key="31">
    <source>
    </source>
</evidence>
<evidence type="ECO:0000303" key="32">
    <source>
    </source>
</evidence>
<evidence type="ECO:0000305" key="33"/>
<evidence type="ECO:0000312" key="34">
    <source>
        <dbReference type="HGNC" id="HGNC:8014"/>
    </source>
</evidence>
<evidence type="ECO:0007744" key="35">
    <source>
        <dbReference type="PDB" id="6A6L"/>
    </source>
</evidence>
<evidence type="ECO:0007744" key="36">
    <source>
    </source>
</evidence>
<evidence type="ECO:0007744" key="37">
    <source>
    </source>
</evidence>
<evidence type="ECO:0007744" key="38">
    <source>
    </source>
</evidence>
<evidence type="ECO:0007744" key="39">
    <source>
    </source>
</evidence>
<evidence type="ECO:0007744" key="40">
    <source>
    </source>
</evidence>
<evidence type="ECO:0007744" key="41">
    <source>
    </source>
</evidence>
<evidence type="ECO:0007744" key="42">
    <source>
    </source>
</evidence>
<evidence type="ECO:0007744" key="43">
    <source>
    </source>
</evidence>
<evidence type="ECO:0007744" key="44">
    <source>
    </source>
</evidence>
<evidence type="ECO:0007744" key="45">
    <source>
    </source>
</evidence>
<evidence type="ECO:0007829" key="46">
    <source>
        <dbReference type="PDB" id="6KUG"/>
    </source>
</evidence>
<evidence type="ECO:0007829" key="47">
    <source>
        <dbReference type="PDB" id="6LMR"/>
    </source>
</evidence>
<evidence type="ECO:0007829" key="48">
    <source>
        <dbReference type="PDB" id="6LMS"/>
    </source>
</evidence>
<sequence length="324" mass="35924">MSSEAETQQPPAAPPAAPALSAADTKPGTTGSGAGSGGPGGLTSAAPAGGDKKVIATKVLGTVKWFNVRNGYGFINRNDTKEDVFVHQTAIKKNNPRKYLRSVGDGETVEFDVVEGEKGAEAANVTGPGGVPVQGSKYAADRNHYRRYPRRRGPPRNYQQNYQNSESGEKNEGSESAPEGQAQQRRPYRRRRFPPYYMRRPYGRRPQYSNPPVQGEVMEGADNQGAGEQGRPVRQNMYRGYRPRFRRGPPRQRQPREDGNEEDKENQGDETQGQQPPQRRYRRNFNYRRRRPENPKPQDGKETKAADPPAENSSAPEAEQGGAE</sequence>